<protein>
    <recommendedName>
        <fullName evidence="1">DNA-binding protein Fis</fullName>
    </recommendedName>
</protein>
<name>FIS_YERPA</name>
<keyword id="KW-0010">Activator</keyword>
<keyword id="KW-0238">DNA-binding</keyword>
<keyword id="KW-0804">Transcription</keyword>
<keyword id="KW-0805">Transcription regulation</keyword>
<evidence type="ECO:0000255" key="1">
    <source>
        <dbReference type="HAMAP-Rule" id="MF_00166"/>
    </source>
</evidence>
<dbReference type="EMBL" id="CP000308">
    <property type="protein sequence ID" value="ABG15628.1"/>
    <property type="molecule type" value="Genomic_DNA"/>
</dbReference>
<dbReference type="RefSeq" id="WP_002210061.1">
    <property type="nucleotide sequence ID" value="NZ_CP009906.1"/>
</dbReference>
<dbReference type="SMR" id="Q1C1P4"/>
<dbReference type="GeneID" id="97454355"/>
<dbReference type="KEGG" id="ypa:YPA_3666"/>
<dbReference type="Proteomes" id="UP000001971">
    <property type="component" value="Chromosome"/>
</dbReference>
<dbReference type="GO" id="GO:0003700">
    <property type="term" value="F:DNA-binding transcription factor activity"/>
    <property type="evidence" value="ECO:0007669"/>
    <property type="project" value="UniProtKB-UniRule"/>
</dbReference>
<dbReference type="GO" id="GO:0043565">
    <property type="term" value="F:sequence-specific DNA binding"/>
    <property type="evidence" value="ECO:0007669"/>
    <property type="project" value="InterPro"/>
</dbReference>
<dbReference type="FunFam" id="1.10.10.60:FF:000006">
    <property type="entry name" value="DNA-binding protein Fis"/>
    <property type="match status" value="1"/>
</dbReference>
<dbReference type="Gene3D" id="1.10.10.60">
    <property type="entry name" value="Homeodomain-like"/>
    <property type="match status" value="1"/>
</dbReference>
<dbReference type="HAMAP" id="MF_00166">
    <property type="entry name" value="DNA_binding_Fis"/>
    <property type="match status" value="1"/>
</dbReference>
<dbReference type="InterPro" id="IPR005412">
    <property type="entry name" value="Fis_DNA-bd"/>
</dbReference>
<dbReference type="InterPro" id="IPR009057">
    <property type="entry name" value="Homeodomain-like_sf"/>
</dbReference>
<dbReference type="InterPro" id="IPR002197">
    <property type="entry name" value="HTH_Fis"/>
</dbReference>
<dbReference type="InterPro" id="IPR050207">
    <property type="entry name" value="Trans_regulatory_Fis"/>
</dbReference>
<dbReference type="NCBIfam" id="NF001659">
    <property type="entry name" value="PRK00430.1"/>
    <property type="match status" value="1"/>
</dbReference>
<dbReference type="PANTHER" id="PTHR47918">
    <property type="entry name" value="DNA-BINDING PROTEIN FIS"/>
    <property type="match status" value="1"/>
</dbReference>
<dbReference type="PANTHER" id="PTHR47918:SF1">
    <property type="entry name" value="DNA-BINDING PROTEIN FIS"/>
    <property type="match status" value="1"/>
</dbReference>
<dbReference type="Pfam" id="PF02954">
    <property type="entry name" value="HTH_8"/>
    <property type="match status" value="1"/>
</dbReference>
<dbReference type="PIRSF" id="PIRSF002097">
    <property type="entry name" value="DNA-binding_Fis"/>
    <property type="match status" value="1"/>
</dbReference>
<dbReference type="PRINTS" id="PR01591">
    <property type="entry name" value="DNABINDNGFIS"/>
</dbReference>
<dbReference type="PRINTS" id="PR01590">
    <property type="entry name" value="HTHFIS"/>
</dbReference>
<dbReference type="SUPFAM" id="SSF46689">
    <property type="entry name" value="Homeodomain-like"/>
    <property type="match status" value="1"/>
</dbReference>
<accession>Q1C1P4</accession>
<comment type="function">
    <text evidence="1">Activates ribosomal RNA transcription. Plays a direct role in upstream activation of rRNA promoters.</text>
</comment>
<comment type="subunit">
    <text evidence="1">Homodimer.</text>
</comment>
<comment type="similarity">
    <text evidence="1">Belongs to the transcriptional regulatory Fis family.</text>
</comment>
<sequence>MFEQRVNSDVLTVATVNSQDQVTQKPLRDSVKQALKNYFAQLNGQDVSDLYELVLAEVEQPLLDMVMQYTRGNQTRAALMMGINRGTLRKKLKKYGMN</sequence>
<proteinExistence type="inferred from homology"/>
<gene>
    <name evidence="1" type="primary">fis</name>
    <name type="ordered locus">YPA_3666</name>
</gene>
<organism>
    <name type="scientific">Yersinia pestis bv. Antiqua (strain Antiqua)</name>
    <dbReference type="NCBI Taxonomy" id="360102"/>
    <lineage>
        <taxon>Bacteria</taxon>
        <taxon>Pseudomonadati</taxon>
        <taxon>Pseudomonadota</taxon>
        <taxon>Gammaproteobacteria</taxon>
        <taxon>Enterobacterales</taxon>
        <taxon>Yersiniaceae</taxon>
        <taxon>Yersinia</taxon>
    </lineage>
</organism>
<feature type="chain" id="PRO_1000023352" description="DNA-binding protein Fis">
    <location>
        <begin position="1"/>
        <end position="98"/>
    </location>
</feature>
<feature type="DNA-binding region" description="H-T-H motif" evidence="1">
    <location>
        <begin position="74"/>
        <end position="93"/>
    </location>
</feature>
<reference key="1">
    <citation type="journal article" date="2006" name="J. Bacteriol.">
        <title>Complete genome sequence of Yersinia pestis strains Antiqua and Nepal516: evidence of gene reduction in an emerging pathogen.</title>
        <authorList>
            <person name="Chain P.S.G."/>
            <person name="Hu P."/>
            <person name="Malfatti S.A."/>
            <person name="Radnedge L."/>
            <person name="Larimer F."/>
            <person name="Vergez L.M."/>
            <person name="Worsham P."/>
            <person name="Chu M.C."/>
            <person name="Andersen G.L."/>
        </authorList>
    </citation>
    <scope>NUCLEOTIDE SEQUENCE [LARGE SCALE GENOMIC DNA]</scope>
    <source>
        <strain>Antiqua</strain>
    </source>
</reference>